<proteinExistence type="evidence at protein level"/>
<reference key="1">
    <citation type="journal article" date="1998" name="Nature">
        <title>Deciphering the biology of Mycobacterium tuberculosis from the complete genome sequence.</title>
        <authorList>
            <person name="Cole S.T."/>
            <person name="Brosch R."/>
            <person name="Parkhill J."/>
            <person name="Garnier T."/>
            <person name="Churcher C.M."/>
            <person name="Harris D.E."/>
            <person name="Gordon S.V."/>
            <person name="Eiglmeier K."/>
            <person name="Gas S."/>
            <person name="Barry C.E. III"/>
            <person name="Tekaia F."/>
            <person name="Badcock K."/>
            <person name="Basham D."/>
            <person name="Brown D."/>
            <person name="Chillingworth T."/>
            <person name="Connor R."/>
            <person name="Davies R.M."/>
            <person name="Devlin K."/>
            <person name="Feltwell T."/>
            <person name="Gentles S."/>
            <person name="Hamlin N."/>
            <person name="Holroyd S."/>
            <person name="Hornsby T."/>
            <person name="Jagels K."/>
            <person name="Krogh A."/>
            <person name="McLean J."/>
            <person name="Moule S."/>
            <person name="Murphy L.D."/>
            <person name="Oliver S."/>
            <person name="Osborne J."/>
            <person name="Quail M.A."/>
            <person name="Rajandream M.A."/>
            <person name="Rogers J."/>
            <person name="Rutter S."/>
            <person name="Seeger K."/>
            <person name="Skelton S."/>
            <person name="Squares S."/>
            <person name="Squares R."/>
            <person name="Sulston J.E."/>
            <person name="Taylor K."/>
            <person name="Whitehead S."/>
            <person name="Barrell B.G."/>
        </authorList>
    </citation>
    <scope>NUCLEOTIDE SEQUENCE [LARGE SCALE GENOMIC DNA]</scope>
    <source>
        <strain>ATCC 25618 / H37Rv</strain>
    </source>
</reference>
<reference key="2">
    <citation type="journal article" date="2004" name="Microbiology">
        <title>Comparative proteome analysis of Mycobacterium tuberculosis grown under aerobic and anaerobic conditions.</title>
        <authorList>
            <person name="Starck J."/>
            <person name="Kallenius G."/>
            <person name="Marklund B.I."/>
            <person name="Andersson D.I."/>
            <person name="Akerlund T."/>
        </authorList>
    </citation>
    <scope>INDUCTION BY ANAEROBISIS</scope>
    <scope>IDENTIFICATION BY MASS SPECTROMETRY</scope>
    <source>
        <strain>S-02293 Harlingen</strain>
    </source>
</reference>
<reference key="3">
    <citation type="journal article" date="2004" name="Can. J. Microbiol.">
        <title>Co-induction of methyltransferase Rv0560c by naphthoquinones and fibric acids suggests attenuation of isoprenoid quinone action in Mycobacterium tuberculosis.</title>
        <authorList>
            <person name="Garbe T.R."/>
        </authorList>
    </citation>
    <scope>INDUCTION BY NAPHTHOQUINONES AND FIBRATES</scope>
    <source>
        <strain>ATCC 25618 / H37Rv</strain>
    </source>
</reference>
<reference key="4">
    <citation type="journal article" date="2005" name="Arch. Microbiol.">
        <title>Gene expression profiling analysis of Mycobacterium tuberculosis genes in response to salicylate.</title>
        <authorList>
            <person name="Denkin S."/>
            <person name="Byrne S."/>
            <person name="Jie C."/>
            <person name="Zhang Y."/>
        </authorList>
    </citation>
    <scope>INDUCTION BY SALICYLATE</scope>
    <scope>OPERON STRUCTURE</scope>
    <source>
        <strain>ATCC 25618 / H37Rv</strain>
    </source>
</reference>
<reference key="5">
    <citation type="journal article" date="2011" name="Mol. Cell. Proteomics">
        <title>Proteogenomic analysis of Mycobacterium tuberculosis by high resolution mass spectrometry.</title>
        <authorList>
            <person name="Kelkar D.S."/>
            <person name="Kumar D."/>
            <person name="Kumar P."/>
            <person name="Balakrishnan L."/>
            <person name="Muthusamy B."/>
            <person name="Yadav A.K."/>
            <person name="Shrivastava P."/>
            <person name="Marimuthu A."/>
            <person name="Anand S."/>
            <person name="Sundaram H."/>
            <person name="Kingsbury R."/>
            <person name="Harsha H.C."/>
            <person name="Nair B."/>
            <person name="Prasad T.S."/>
            <person name="Chauhan D.S."/>
            <person name="Katoch K."/>
            <person name="Katoch V.M."/>
            <person name="Kumar P."/>
            <person name="Chaerkady R."/>
            <person name="Ramachandran S."/>
            <person name="Dash D."/>
            <person name="Pandey A."/>
        </authorList>
    </citation>
    <scope>IDENTIFICATION BY MASS SPECTROMETRY [LARGE SCALE ANALYSIS]</scope>
    <source>
        <strain>ATCC 25618 / H37Rv</strain>
    </source>
</reference>
<reference key="6">
    <citation type="journal article" date="2012" name="PLoS ONE">
        <title>The promoter of Rv0560c is induced by salicylate and structurally-related compounds in Mycobacterium tuberculosis.</title>
        <authorList>
            <person name="Schuessler D.L."/>
            <person name="Parish T."/>
        </authorList>
    </citation>
    <scope>INDUCTION</scope>
    <source>
        <strain>ATCC 25618 / H37Rv</strain>
    </source>
</reference>
<reference key="7">
    <citation type="journal article" date="2016" name="Proc. Natl. Acad. Sci. U.S.A.">
        <title>N-methylation of a bactericidal compound as a resistance mechanism in Mycobacterium tuberculosis.</title>
        <authorList>
            <person name="Warrier T."/>
            <person name="Kapilashrami K."/>
            <person name="Argyrou A."/>
            <person name="Ioerger T.R."/>
            <person name="Little D."/>
            <person name="Murphy K.C."/>
            <person name="Nandakumar M."/>
            <person name="Park S."/>
            <person name="Gold B."/>
            <person name="Mi J."/>
            <person name="Zhang T."/>
            <person name="Meiler E."/>
            <person name="Rees M."/>
            <person name="Somersan-Karakaya S."/>
            <person name="Porras-De Francisco E."/>
            <person name="Martinez-Hoyos M."/>
            <person name="Burns-Huang K."/>
            <person name="Roberts J."/>
            <person name="Ling Y."/>
            <person name="Rhee K.Y."/>
            <person name="Mendoza-Losana A."/>
            <person name="Luo M."/>
            <person name="Nathan C.F."/>
        </authorList>
    </citation>
    <scope>FUNCTION</scope>
    <scope>CATALYTIC ACTIVITY</scope>
    <scope>BIOPHYSICOCHEMICAL PROPERTIES</scope>
    <scope>INDUCTION</scope>
    <scope>MUTAGENESIS OF SER-140</scope>
    <source>
        <strain>H37Rv</strain>
    </source>
</reference>
<reference key="8">
    <citation type="journal article" date="2017" name="Tuberculosis">
        <title>Mycobacterium tuberculosis Rv0560c is not essential for growth in vitro or in macrophages.</title>
        <authorList>
            <person name="Kokoczka R."/>
            <person name="Schuessler D.L."/>
            <person name="Early J.V."/>
            <person name="Parish T."/>
        </authorList>
    </citation>
    <scope>DISRUPTION PHENOTYPE</scope>
</reference>
<reference key="9">
    <citation type="journal article" date="2019" name="Front. Cell. Infect. Microbiol.">
        <title>The inhibitory effect of GlmU acetyltransferase inhibitor TPSA on Mycobacterium tuberculosis may be affected due to its methylation by methyltransferase Rv0560c.</title>
        <authorList>
            <person name="Chen C."/>
            <person name="Han X."/>
            <person name="Yan Q."/>
            <person name="Wang C."/>
            <person name="Jia L."/>
            <person name="Taj A."/>
            <person name="Zhao L."/>
            <person name="Ma Y."/>
        </authorList>
    </citation>
    <scope>FUNCTION</scope>
    <source>
        <strain>H37Rv</strain>
    </source>
</reference>
<reference key="10">
    <citation type="journal article" date="2021" name="FEBS J.">
        <title>Modification of the Pseudomonas aeruginosa toxin 2-heptyl-1-hydroxyquinolin-4(1H)-one and other secondary metabolites by methyltransferases from mycobacteria.</title>
        <authorList>
            <person name="Sartor P."/>
            <person name="Bock J."/>
            <person name="Hennecke U."/>
            <person name="Thierbach S."/>
            <person name="Fetzner S."/>
        </authorList>
    </citation>
    <scope>FUNCTION</scope>
    <scope>CATALYTIC ACTIVITY</scope>
    <scope>BIOPHYSICOCHEMICAL PROPERTIES</scope>
    <scope>SUBUNIT</scope>
</reference>
<sequence length="241" mass="25945">MSTVLTYIRAVDIYEHMTESLDLEFESAYRGESVAFGEGVRPPWSIGEPQPELAALIVQGKFRGDVLDVGCGEAAISLALAERGHTTVGLDLSPAAVELARHEAAKRGLANASFEVADASSFTGYDGRFDTIVDSTLFHSMPVESREGYLQSIVRAAAPGASYFVLVFDRAAIPEGPINAVTEDELRAAVSKYWIIDEIKPARLYARFPAGFAGMPALLDIREEPNGLQSIGGWLLSAHLG</sequence>
<keyword id="KW-0002">3D-structure</keyword>
<keyword id="KW-0963">Cytoplasm</keyword>
<keyword id="KW-0489">Methyltransferase</keyword>
<keyword id="KW-1185">Reference proteome</keyword>
<keyword id="KW-0949">S-adenosyl-L-methionine</keyword>
<keyword id="KW-0808">Transferase</keyword>
<dbReference type="EC" id="2.1.1.374" evidence="6 9"/>
<dbReference type="EMBL" id="AL123456">
    <property type="protein sequence ID" value="CCP43298.1"/>
    <property type="molecule type" value="Genomic_DNA"/>
</dbReference>
<dbReference type="PIR" id="C70549">
    <property type="entry name" value="C70549"/>
</dbReference>
<dbReference type="RefSeq" id="NP_215074.1">
    <property type="nucleotide sequence ID" value="NC_000962.3"/>
</dbReference>
<dbReference type="RefSeq" id="WP_003402938.1">
    <property type="nucleotide sequence ID" value="NC_000962.3"/>
</dbReference>
<dbReference type="PDB" id="7BGG">
    <property type="method" value="X-ray"/>
    <property type="resolution" value="1.04 A"/>
    <property type="chains" value="A=18-241"/>
</dbReference>
<dbReference type="PDB" id="7NDM">
    <property type="method" value="X-ray"/>
    <property type="resolution" value="1.35 A"/>
    <property type="chains" value="A=18-241"/>
</dbReference>
<dbReference type="PDB" id="7NMK">
    <property type="method" value="X-ray"/>
    <property type="resolution" value="1.20 A"/>
    <property type="chains" value="A=18-241"/>
</dbReference>
<dbReference type="PDB" id="7NOY">
    <property type="method" value="X-ray"/>
    <property type="resolution" value="1.80 A"/>
    <property type="chains" value="A=18-241"/>
</dbReference>
<dbReference type="PDBsum" id="7BGG"/>
<dbReference type="PDBsum" id="7NDM"/>
<dbReference type="PDBsum" id="7NMK"/>
<dbReference type="PDBsum" id="7NOY"/>
<dbReference type="SMR" id="P9WKL5"/>
<dbReference type="FunCoup" id="P9WKL5">
    <property type="interactions" value="93"/>
</dbReference>
<dbReference type="STRING" id="83332.Rv0560c"/>
<dbReference type="PaxDb" id="83332-Rv0560c"/>
<dbReference type="GeneID" id="887637"/>
<dbReference type="KEGG" id="mtu:Rv0560c"/>
<dbReference type="KEGG" id="mtv:RVBD_0560c"/>
<dbReference type="PATRIC" id="fig|83332.111.peg.617"/>
<dbReference type="TubercuList" id="Rv0560c"/>
<dbReference type="eggNOG" id="COG2226">
    <property type="taxonomic scope" value="Bacteria"/>
</dbReference>
<dbReference type="InParanoid" id="P9WKL5"/>
<dbReference type="OrthoDB" id="3825914at2"/>
<dbReference type="PhylomeDB" id="P9WKL5"/>
<dbReference type="BioCyc" id="MetaCyc:G185E-4693-MONOMER"/>
<dbReference type="BRENDA" id="2.1.1.374">
    <property type="organism ID" value="3445"/>
</dbReference>
<dbReference type="SABIO-RK" id="P9WKL5"/>
<dbReference type="Proteomes" id="UP000001584">
    <property type="component" value="Chromosome"/>
</dbReference>
<dbReference type="GO" id="GO:0005829">
    <property type="term" value="C:cytosol"/>
    <property type="evidence" value="ECO:0000314"/>
    <property type="project" value="MTBBASE"/>
</dbReference>
<dbReference type="GO" id="GO:0008168">
    <property type="term" value="F:methyltransferase activity"/>
    <property type="evidence" value="ECO:0000318"/>
    <property type="project" value="GO_Central"/>
</dbReference>
<dbReference type="GO" id="GO:0010106">
    <property type="term" value="P:cellular response to iron ion starvation"/>
    <property type="evidence" value="ECO:0000270"/>
    <property type="project" value="MTBBASE"/>
</dbReference>
<dbReference type="GO" id="GO:0032259">
    <property type="term" value="P:methylation"/>
    <property type="evidence" value="ECO:0007669"/>
    <property type="project" value="UniProtKB-KW"/>
</dbReference>
<dbReference type="GO" id="GO:0001666">
    <property type="term" value="P:response to hypoxia"/>
    <property type="evidence" value="ECO:0000270"/>
    <property type="project" value="MTBBASE"/>
</dbReference>
<dbReference type="GO" id="GO:0009751">
    <property type="term" value="P:response to salicylic acid"/>
    <property type="evidence" value="ECO:0000270"/>
    <property type="project" value="MTBBASE"/>
</dbReference>
<dbReference type="CDD" id="cd02440">
    <property type="entry name" value="AdoMet_MTases"/>
    <property type="match status" value="1"/>
</dbReference>
<dbReference type="FunFam" id="3.40.50.150:FF:000291">
    <property type="entry name" value="Benzoquinone methyltransferase"/>
    <property type="match status" value="1"/>
</dbReference>
<dbReference type="Gene3D" id="3.40.50.150">
    <property type="entry name" value="Vaccinia Virus protein VP39"/>
    <property type="match status" value="1"/>
</dbReference>
<dbReference type="InterPro" id="IPR041698">
    <property type="entry name" value="Methyltransf_25"/>
</dbReference>
<dbReference type="InterPro" id="IPR029063">
    <property type="entry name" value="SAM-dependent_MTases_sf"/>
</dbReference>
<dbReference type="PANTHER" id="PTHR43464">
    <property type="entry name" value="METHYLTRANSFERASE"/>
    <property type="match status" value="1"/>
</dbReference>
<dbReference type="PANTHER" id="PTHR43464:SF19">
    <property type="entry name" value="UBIQUINONE BIOSYNTHESIS O-METHYLTRANSFERASE, MITOCHONDRIAL"/>
    <property type="match status" value="1"/>
</dbReference>
<dbReference type="Pfam" id="PF13649">
    <property type="entry name" value="Methyltransf_25"/>
    <property type="match status" value="1"/>
</dbReference>
<dbReference type="SUPFAM" id="SSF53335">
    <property type="entry name" value="S-adenosyl-L-methionine-dependent methyltransferases"/>
    <property type="match status" value="1"/>
</dbReference>
<comment type="function">
    <text evidence="6 8 9 12">Involved in cellular response to chemical stress and may contribute to resistance toward antimicrobial natural compounds as well as drugs (Probable). Catalyzes the methylation and detoxification of the P.aeruginosa toxin 2-heptyl-1-hydroxy-4(1H)-quinolinone (HQNO) to 2-heptyl-1-methoxy-4(1H)-quinolinone (HMOQ) (PubMed:33064871). Can also methylate 3-bromo-2-heptyl-1-hydroxy-4(1H)-quinolinone, and shows much lower activity with 1-hydroxyquinolin-4(1H)-one, quercetin, 4-hydroxyquinolin-2(1H)-one (DHQ) and 4-hydroxyisoquinolin-1(2H)-one (PubMed:33064871). In addition, N-methylates and abolishes the mycobactericidal activity of 3-methyl-1-oxo-2-[3-oxo-3-(pyrrolidin-1-yl)propyl]-1,5-dihydrobenzo[4,5]imidazo[1,2-a]pyridine-4-carbonitrile (compound 14), an inhibitor of DprE1 (PubMed:27432954). Also methylates and reduces the inhibitory effect of TPSA (2-[5-(2-{[4-(2-thienyl)-2-pyrimidinyl]sulfanyl}acetyl)-2-thienyl]acetic acid), an inhibitor of GlmU acetyltransferase (PubMed:31380295).</text>
</comment>
<comment type="catalytic activity">
    <reaction evidence="9">
        <text>2-heptyl-1-hydroxy-4(1H)-quinolinone + S-adenosyl-L-methionine = 2-heptyl-1-methoxy-4(1H)-quinolinone + S-adenosyl-L-homocysteine + H(+)</text>
        <dbReference type="Rhea" id="RHEA:65924"/>
        <dbReference type="ChEBI" id="CHEBI:15378"/>
        <dbReference type="ChEBI" id="CHEBI:57856"/>
        <dbReference type="ChEBI" id="CHEBI:59789"/>
        <dbReference type="ChEBI" id="CHEBI:157768"/>
        <dbReference type="ChEBI" id="CHEBI:157769"/>
        <dbReference type="EC" id="2.1.1.374"/>
    </reaction>
    <physiologicalReaction direction="left-to-right" evidence="9">
        <dbReference type="Rhea" id="RHEA:65925"/>
    </physiologicalReaction>
</comment>
<comment type="catalytic activity">
    <reaction evidence="9">
        <text>3-bromo-2-heptyl-1-hydroxy-4(1H)-quinolinone + S-adenosyl-L-methionine = 3-bromo-2-heptyl-1-methoxy-4(1H)-quinolinone + S-adenosyl-L-homocysteine + H(+)</text>
        <dbReference type="Rhea" id="RHEA:65928"/>
        <dbReference type="ChEBI" id="CHEBI:15378"/>
        <dbReference type="ChEBI" id="CHEBI:57856"/>
        <dbReference type="ChEBI" id="CHEBI:59789"/>
        <dbReference type="ChEBI" id="CHEBI:157778"/>
        <dbReference type="ChEBI" id="CHEBI:157779"/>
        <dbReference type="EC" id="2.1.1.374"/>
    </reaction>
    <physiologicalReaction direction="left-to-right" evidence="9">
        <dbReference type="Rhea" id="RHEA:65929"/>
    </physiologicalReaction>
</comment>
<comment type="catalytic activity">
    <reaction evidence="6">
        <text>3-methyl-1-oxo-2-[3-oxo-3-(pyrrolidin-1-yl)propyl]-1,5-dihydrobenzo[4,5]imidazo[1,2-a]pyridine-4-carbonitrile + S-adenosyl-L-methionine = 3,5-dimethyl-1-oxo-2-[3-oxo-3-(pyrrolidin-1-yl)propyl]-1,5-dihydrobenzo[4,5]imidazo[1,2-a]pyridine-4-carbonitrile + S-adenosyl-L-homocysteine + H(+)</text>
        <dbReference type="Rhea" id="RHEA:65932"/>
        <dbReference type="ChEBI" id="CHEBI:15378"/>
        <dbReference type="ChEBI" id="CHEBI:57856"/>
        <dbReference type="ChEBI" id="CHEBI:59789"/>
        <dbReference type="ChEBI" id="CHEBI:158799"/>
        <dbReference type="ChEBI" id="CHEBI:158993"/>
        <dbReference type="EC" id="2.1.1.374"/>
    </reaction>
    <physiologicalReaction direction="left-to-right" evidence="6">
        <dbReference type="Rhea" id="RHEA:65933"/>
    </physiologicalReaction>
</comment>
<comment type="biophysicochemical properties">
    <kinetics>
        <KM evidence="9">9.4 uM for HQNO</KM>
        <KM evidence="6">4 uM for compound 14</KM>
        <text evidence="6 9">kcat is 0.8 sec(-1) with HQNO as substrate (PubMed:33064871). kcat is 0.074 min(-1) with compound 14 as substrate (PubMed:27432954).</text>
    </kinetics>
</comment>
<comment type="subunit">
    <text evidence="9">Monomer.</text>
</comment>
<comment type="subcellular location">
    <subcellularLocation>
        <location evidence="1">Cytoplasm</location>
    </subcellularLocation>
</comment>
<comment type="induction">
    <text evidence="2 3 4 5 6">Repressed by the transcriptional repressor Rv2887 (PubMed:27432954). Induced by salicylate, during iron deprivation (at RNA level), by anaerobiosis and by superoxide generating naphthoquinones such as menadione and plumbagin and by pro-oxidant phenoxyisobutyrates (fibrates) such as gemfibrozil (at protein level). Part of the Rv0560c-Rv0559c operon. Operon induction is slow but is maintained for at least 2 weeks in aerobic culture in the presence of salicylate (PubMed:15528667, PubMed:15644891, PubMed:16175359, PubMed:22485172).</text>
</comment>
<comment type="disruption phenotype">
    <text evidence="7">Deletion of the gene has no effect on growth in medium containing salicylate or on intra-macrophage replication (PubMed:28061949). Deletion does not affect sensitivity to plumbagin, menadione, nigericin, PAS or CCCP (PubMed:28061949).</text>
</comment>
<comment type="miscellaneous">
    <text evidence="7">Is dispensable under in vitro conditions in both axenic and macrophage culture.</text>
</comment>
<comment type="similarity">
    <text evidence="11">Belongs to the methyltransferase superfamily.</text>
</comment>
<comment type="caution">
    <text evidence="11">It is uncertain whether Met-1 or Met-17 is the initiator.</text>
</comment>
<feature type="chain" id="PRO_0000419777" description="2-heptyl-1-hydroxyquinolin-4(1H)-one methyltransferase">
    <location>
        <begin position="1"/>
        <end position="241"/>
    </location>
</feature>
<feature type="mutagenesis site" description="6.7-fold increase in catalytic efficiency with componud 14 as substrate." evidence="6">
    <original>S</original>
    <variation>A</variation>
    <location>
        <position position="140"/>
    </location>
</feature>
<feature type="helix" evidence="13">
    <location>
        <begin position="22"/>
        <end position="30"/>
    </location>
</feature>
<feature type="helix" evidence="13">
    <location>
        <begin position="51"/>
        <end position="58"/>
    </location>
</feature>
<feature type="strand" evidence="13">
    <location>
        <begin position="64"/>
        <end position="69"/>
    </location>
</feature>
<feature type="helix" evidence="13">
    <location>
        <begin position="75"/>
        <end position="82"/>
    </location>
</feature>
<feature type="strand" evidence="13">
    <location>
        <begin position="87"/>
        <end position="92"/>
    </location>
</feature>
<feature type="helix" evidence="13">
    <location>
        <begin position="94"/>
        <end position="106"/>
    </location>
</feature>
<feature type="strand" evidence="13">
    <location>
        <begin position="110"/>
        <end position="116"/>
    </location>
</feature>
<feature type="turn" evidence="14">
    <location>
        <begin position="119"/>
        <end position="121"/>
    </location>
</feature>
<feature type="strand" evidence="13">
    <location>
        <begin position="129"/>
        <end position="136"/>
    </location>
</feature>
<feature type="helix" evidence="13">
    <location>
        <begin position="138"/>
        <end position="140"/>
    </location>
</feature>
<feature type="helix" evidence="13">
    <location>
        <begin position="143"/>
        <end position="145"/>
    </location>
</feature>
<feature type="helix" evidence="13">
    <location>
        <begin position="146"/>
        <end position="155"/>
    </location>
</feature>
<feature type="strand" evidence="13">
    <location>
        <begin position="157"/>
        <end position="169"/>
    </location>
</feature>
<feature type="turn" evidence="13">
    <location>
        <begin position="170"/>
        <end position="172"/>
    </location>
</feature>
<feature type="strand" evidence="13">
    <location>
        <begin position="175"/>
        <end position="178"/>
    </location>
</feature>
<feature type="helix" evidence="13">
    <location>
        <begin position="183"/>
        <end position="191"/>
    </location>
</feature>
<feature type="strand" evidence="13">
    <location>
        <begin position="194"/>
        <end position="206"/>
    </location>
</feature>
<feature type="turn" evidence="13">
    <location>
        <begin position="210"/>
        <end position="217"/>
    </location>
</feature>
<feature type="helix" evidence="13">
    <location>
        <begin position="225"/>
        <end position="227"/>
    </location>
</feature>
<feature type="strand" evidence="13">
    <location>
        <begin position="229"/>
        <end position="239"/>
    </location>
</feature>
<gene>
    <name evidence="10" type="primary">htm</name>
    <name type="ordered locus">Rv0560c</name>
</gene>
<organism>
    <name type="scientific">Mycobacterium tuberculosis (strain ATCC 25618 / H37Rv)</name>
    <dbReference type="NCBI Taxonomy" id="83332"/>
    <lineage>
        <taxon>Bacteria</taxon>
        <taxon>Bacillati</taxon>
        <taxon>Actinomycetota</taxon>
        <taxon>Actinomycetes</taxon>
        <taxon>Mycobacteriales</taxon>
        <taxon>Mycobacteriaceae</taxon>
        <taxon>Mycobacterium</taxon>
        <taxon>Mycobacterium tuberculosis complex</taxon>
    </lineage>
</organism>
<evidence type="ECO:0000250" key="1">
    <source>
        <dbReference type="UniProtKB" id="A5TZU0"/>
    </source>
</evidence>
<evidence type="ECO:0000269" key="2">
    <source>
    </source>
</evidence>
<evidence type="ECO:0000269" key="3">
    <source>
    </source>
</evidence>
<evidence type="ECO:0000269" key="4">
    <source>
    </source>
</evidence>
<evidence type="ECO:0000269" key="5">
    <source>
    </source>
</evidence>
<evidence type="ECO:0000269" key="6">
    <source>
    </source>
</evidence>
<evidence type="ECO:0000269" key="7">
    <source>
    </source>
</evidence>
<evidence type="ECO:0000269" key="8">
    <source>
    </source>
</evidence>
<evidence type="ECO:0000269" key="9">
    <source>
    </source>
</evidence>
<evidence type="ECO:0000303" key="10">
    <source>
    </source>
</evidence>
<evidence type="ECO:0000305" key="11"/>
<evidence type="ECO:0000305" key="12">
    <source>
    </source>
</evidence>
<evidence type="ECO:0007829" key="13">
    <source>
        <dbReference type="PDB" id="7BGG"/>
    </source>
</evidence>
<evidence type="ECO:0007829" key="14">
    <source>
        <dbReference type="PDB" id="7NDM"/>
    </source>
</evidence>
<protein>
    <recommendedName>
        <fullName evidence="11">2-heptyl-1-hydroxyquinolin-4(1H)-one methyltransferase</fullName>
        <shortName evidence="10">HQNO methyltransferase</shortName>
        <shortName evidence="10">HQNO-MTase</shortName>
        <ecNumber evidence="6 9">2.1.1.374</ecNumber>
    </recommendedName>
    <alternativeName>
        <fullName evidence="10">Heterocyclic toxin methyltransferase</fullName>
    </alternativeName>
</protein>
<accession>P9WKL5</accession>
<accession>F2GMK5</accession>
<accession>L0T6V5</accession>
<accession>O06426</accession>
<accession>Q7D9M8</accession>
<name>HTM_MYCTU</name>